<evidence type="ECO:0000255" key="1">
    <source>
        <dbReference type="HAMAP-Rule" id="MF_00821"/>
    </source>
</evidence>
<comment type="function">
    <text evidence="1">One of the proteins required for the normal export of preproteins out of the cell cytoplasm. It is a molecular chaperone that binds to a subset of precursor proteins, maintaining them in a translocation-competent state. It also specifically binds to its receptor SecA.</text>
</comment>
<comment type="subunit">
    <text evidence="1">Homotetramer, a dimer of dimers. One homotetramer interacts with 1 SecA dimer.</text>
</comment>
<comment type="subcellular location">
    <subcellularLocation>
        <location evidence="1">Cytoplasm</location>
    </subcellularLocation>
</comment>
<comment type="similarity">
    <text evidence="1">Belongs to the SecB family.</text>
</comment>
<sequence>MQNNEIQPSFLIQKVYTKDVSFETINSPACFKEQWNPSSDFNIDINTTKINDENFELDLTITVTTKNNETNAYIAEVTQSGIFTITSMSEEQIDSVLNTYCANTLFPYAKRIIDSSIIKGGFLPLNLAPINFDAIYLQKKSSPKREH</sequence>
<name>SECB2_FRATF</name>
<feature type="chain" id="PRO_0000318226" description="Protein-export protein SecB 2">
    <location>
        <begin position="1"/>
        <end position="147"/>
    </location>
</feature>
<protein>
    <recommendedName>
        <fullName evidence="1">Protein-export protein SecB 2</fullName>
    </recommendedName>
</protein>
<gene>
    <name evidence="1" type="primary">secB2</name>
    <name type="ordered locus">FTA_0311</name>
</gene>
<organism>
    <name type="scientific">Francisella tularensis subsp. holarctica (strain FTNF002-00 / FTA)</name>
    <dbReference type="NCBI Taxonomy" id="458234"/>
    <lineage>
        <taxon>Bacteria</taxon>
        <taxon>Pseudomonadati</taxon>
        <taxon>Pseudomonadota</taxon>
        <taxon>Gammaproteobacteria</taxon>
        <taxon>Thiotrichales</taxon>
        <taxon>Francisellaceae</taxon>
        <taxon>Francisella</taxon>
    </lineage>
</organism>
<accession>A7N9Y5</accession>
<keyword id="KW-0143">Chaperone</keyword>
<keyword id="KW-0963">Cytoplasm</keyword>
<keyword id="KW-0653">Protein transport</keyword>
<keyword id="KW-0811">Translocation</keyword>
<keyword id="KW-0813">Transport</keyword>
<dbReference type="EMBL" id="CP000803">
    <property type="protein sequence ID" value="ABU60788.1"/>
    <property type="molecule type" value="Genomic_DNA"/>
</dbReference>
<dbReference type="SMR" id="A7N9Y5"/>
<dbReference type="KEGG" id="fta:FTA_0311"/>
<dbReference type="HOGENOM" id="CLU_111574_1_0_6"/>
<dbReference type="GO" id="GO:0005737">
    <property type="term" value="C:cytoplasm"/>
    <property type="evidence" value="ECO:0007669"/>
    <property type="project" value="UniProtKB-SubCell"/>
</dbReference>
<dbReference type="GO" id="GO:0051082">
    <property type="term" value="F:unfolded protein binding"/>
    <property type="evidence" value="ECO:0007669"/>
    <property type="project" value="InterPro"/>
</dbReference>
<dbReference type="GO" id="GO:0006457">
    <property type="term" value="P:protein folding"/>
    <property type="evidence" value="ECO:0007669"/>
    <property type="project" value="UniProtKB-UniRule"/>
</dbReference>
<dbReference type="GO" id="GO:0051262">
    <property type="term" value="P:protein tetramerization"/>
    <property type="evidence" value="ECO:0007669"/>
    <property type="project" value="InterPro"/>
</dbReference>
<dbReference type="GO" id="GO:0015031">
    <property type="term" value="P:protein transport"/>
    <property type="evidence" value="ECO:0007669"/>
    <property type="project" value="UniProtKB-UniRule"/>
</dbReference>
<dbReference type="Gene3D" id="3.10.420.10">
    <property type="entry name" value="SecB-like"/>
    <property type="match status" value="1"/>
</dbReference>
<dbReference type="HAMAP" id="MF_00821">
    <property type="entry name" value="SecB"/>
    <property type="match status" value="1"/>
</dbReference>
<dbReference type="InterPro" id="IPR003708">
    <property type="entry name" value="SecB"/>
</dbReference>
<dbReference type="InterPro" id="IPR035958">
    <property type="entry name" value="SecB-like_sf"/>
</dbReference>
<dbReference type="NCBIfam" id="NF004391">
    <property type="entry name" value="PRK05751.1-2"/>
    <property type="match status" value="1"/>
</dbReference>
<dbReference type="NCBIfam" id="TIGR00809">
    <property type="entry name" value="secB"/>
    <property type="match status" value="1"/>
</dbReference>
<dbReference type="PANTHER" id="PTHR36918">
    <property type="match status" value="1"/>
</dbReference>
<dbReference type="PANTHER" id="PTHR36918:SF1">
    <property type="entry name" value="PROTEIN-EXPORT PROTEIN SECB"/>
    <property type="match status" value="1"/>
</dbReference>
<dbReference type="Pfam" id="PF02556">
    <property type="entry name" value="SecB"/>
    <property type="match status" value="1"/>
</dbReference>
<dbReference type="PRINTS" id="PR01594">
    <property type="entry name" value="SECBCHAPRONE"/>
</dbReference>
<dbReference type="SUPFAM" id="SSF54611">
    <property type="entry name" value="SecB-like"/>
    <property type="match status" value="1"/>
</dbReference>
<reference key="1">
    <citation type="journal article" date="2009" name="PLoS ONE">
        <title>Complete genome sequence of Francisella tularensis subspecies holarctica FTNF002-00.</title>
        <authorList>
            <person name="Barabote R.D."/>
            <person name="Xie G."/>
            <person name="Brettin T.S."/>
            <person name="Hinrichs S.H."/>
            <person name="Fey P.D."/>
            <person name="Jay J.J."/>
            <person name="Engle J.L."/>
            <person name="Godbole S.D."/>
            <person name="Noronha J.M."/>
            <person name="Scheuermann R.H."/>
            <person name="Zhou L.W."/>
            <person name="Lion C."/>
            <person name="Dempsey M.P."/>
        </authorList>
    </citation>
    <scope>NUCLEOTIDE SEQUENCE [LARGE SCALE GENOMIC DNA]</scope>
    <source>
        <strain>FTNF002-00 / FTA</strain>
    </source>
</reference>
<proteinExistence type="inferred from homology"/>